<accession>Q2SFY4</accession>
<gene>
    <name evidence="1" type="primary">cheB2</name>
    <name type="ordered locus">HCH_03703</name>
</gene>
<comment type="function">
    <text evidence="1">Involved in chemotaxis. Part of a chemotaxis signal transduction system that modulates chemotaxis in response to various stimuli. Catalyzes the demethylation of specific methylglutamate residues introduced into the chemoreceptors (methyl-accepting chemotaxis proteins or MCP) by CheR. Also mediates the irreversible deamidation of specific glutamine residues to glutamic acid.</text>
</comment>
<comment type="catalytic activity">
    <reaction evidence="1">
        <text>[protein]-L-glutamate 5-O-methyl ester + H2O = L-glutamyl-[protein] + methanol + H(+)</text>
        <dbReference type="Rhea" id="RHEA:23236"/>
        <dbReference type="Rhea" id="RHEA-COMP:10208"/>
        <dbReference type="Rhea" id="RHEA-COMP:10311"/>
        <dbReference type="ChEBI" id="CHEBI:15377"/>
        <dbReference type="ChEBI" id="CHEBI:15378"/>
        <dbReference type="ChEBI" id="CHEBI:17790"/>
        <dbReference type="ChEBI" id="CHEBI:29973"/>
        <dbReference type="ChEBI" id="CHEBI:82795"/>
        <dbReference type="EC" id="3.1.1.61"/>
    </reaction>
</comment>
<comment type="catalytic activity">
    <reaction evidence="1">
        <text>L-glutaminyl-[protein] + H2O = L-glutamyl-[protein] + NH4(+)</text>
        <dbReference type="Rhea" id="RHEA:16441"/>
        <dbReference type="Rhea" id="RHEA-COMP:10207"/>
        <dbReference type="Rhea" id="RHEA-COMP:10208"/>
        <dbReference type="ChEBI" id="CHEBI:15377"/>
        <dbReference type="ChEBI" id="CHEBI:28938"/>
        <dbReference type="ChEBI" id="CHEBI:29973"/>
        <dbReference type="ChEBI" id="CHEBI:30011"/>
        <dbReference type="EC" id="3.5.1.44"/>
    </reaction>
</comment>
<comment type="subcellular location">
    <subcellularLocation>
        <location evidence="1">Cytoplasm</location>
    </subcellularLocation>
</comment>
<comment type="domain">
    <text evidence="1">Contains a C-terminal catalytic domain, and an N-terminal region which modulates catalytic activity.</text>
</comment>
<comment type="PTM">
    <text evidence="1">Phosphorylated by CheA. Phosphorylation of the N-terminal regulatory domain activates the methylesterase activity.</text>
</comment>
<comment type="similarity">
    <text evidence="1">Belongs to the CheB family.</text>
</comment>
<reference key="1">
    <citation type="journal article" date="2005" name="Nucleic Acids Res.">
        <title>Genomic blueprint of Hahella chejuensis, a marine microbe producing an algicidal agent.</title>
        <authorList>
            <person name="Jeong H."/>
            <person name="Yim J.H."/>
            <person name="Lee C."/>
            <person name="Choi S.-H."/>
            <person name="Park Y.K."/>
            <person name="Yoon S.H."/>
            <person name="Hur C.-G."/>
            <person name="Kang H.-Y."/>
            <person name="Kim D."/>
            <person name="Lee H.H."/>
            <person name="Park K.H."/>
            <person name="Park S.-H."/>
            <person name="Park H.-S."/>
            <person name="Lee H.K."/>
            <person name="Oh T.K."/>
            <person name="Kim J.F."/>
        </authorList>
    </citation>
    <scope>NUCLEOTIDE SEQUENCE [LARGE SCALE GENOMIC DNA]</scope>
    <source>
        <strain>KCTC 2396</strain>
    </source>
</reference>
<organism>
    <name type="scientific">Hahella chejuensis (strain KCTC 2396)</name>
    <dbReference type="NCBI Taxonomy" id="349521"/>
    <lineage>
        <taxon>Bacteria</taxon>
        <taxon>Pseudomonadati</taxon>
        <taxon>Pseudomonadota</taxon>
        <taxon>Gammaproteobacteria</taxon>
        <taxon>Oceanospirillales</taxon>
        <taxon>Hahellaceae</taxon>
        <taxon>Hahella</taxon>
    </lineage>
</organism>
<evidence type="ECO:0000255" key="1">
    <source>
        <dbReference type="HAMAP-Rule" id="MF_00099"/>
    </source>
</evidence>
<keyword id="KW-0145">Chemotaxis</keyword>
<keyword id="KW-0963">Cytoplasm</keyword>
<keyword id="KW-0378">Hydrolase</keyword>
<keyword id="KW-0597">Phosphoprotein</keyword>
<keyword id="KW-1185">Reference proteome</keyword>
<protein>
    <recommendedName>
        <fullName evidence="1">Protein-glutamate methylesterase/protein-glutamine glutaminase 2</fullName>
        <ecNumber evidence="1">3.1.1.61</ecNumber>
        <ecNumber evidence="1">3.5.1.44</ecNumber>
    </recommendedName>
</protein>
<name>CHEB2_HAHCH</name>
<sequence length="368" mass="38865">MNAKIKVLLVDDSAVVRQVLQQVLERDKNIEVIGAAADPIFAQLRMSKQWPDVIVLDVEMPRMDGITFLKKLMAERPTPVVMCSTLTSKGAQTSMKALAAGAVAVVAKPAVGVKEYLESAAGELIMEIKAAAKANMRNMPAATASAQSMALPAKFSADAVIPLRTGGVIAGANKIAALGTSTGGTQALEYVLTRLPRNCPGIVIVQHMPEKFTAAFAERLNSICELEILEAESGHQVAPGRALIAPGGKHMLLRRSGAQYFVEIMSGPPVNRHRPSVDVLFRSVAQAAGRNALGVIMTGMGDDGAKGLLEMRNAGALTIGQDERSCIVYGMPKEAAKIGAVTREISLERIPQCVLDMGASLTASAQRG</sequence>
<dbReference type="EC" id="3.1.1.61" evidence="1"/>
<dbReference type="EC" id="3.5.1.44" evidence="1"/>
<dbReference type="EMBL" id="CP000155">
    <property type="protein sequence ID" value="ABC30440.1"/>
    <property type="molecule type" value="Genomic_DNA"/>
</dbReference>
<dbReference type="RefSeq" id="WP_011397508.1">
    <property type="nucleotide sequence ID" value="NC_007645.1"/>
</dbReference>
<dbReference type="SMR" id="Q2SFY4"/>
<dbReference type="STRING" id="349521.HCH_03703"/>
<dbReference type="KEGG" id="hch:HCH_03703"/>
<dbReference type="eggNOG" id="COG2201">
    <property type="taxonomic scope" value="Bacteria"/>
</dbReference>
<dbReference type="HOGENOM" id="CLU_000445_51_0_6"/>
<dbReference type="OrthoDB" id="9793421at2"/>
<dbReference type="Proteomes" id="UP000000238">
    <property type="component" value="Chromosome"/>
</dbReference>
<dbReference type="GO" id="GO:0005737">
    <property type="term" value="C:cytoplasm"/>
    <property type="evidence" value="ECO:0007669"/>
    <property type="project" value="UniProtKB-SubCell"/>
</dbReference>
<dbReference type="GO" id="GO:0000156">
    <property type="term" value="F:phosphorelay response regulator activity"/>
    <property type="evidence" value="ECO:0007669"/>
    <property type="project" value="InterPro"/>
</dbReference>
<dbReference type="GO" id="GO:0008984">
    <property type="term" value="F:protein-glutamate methylesterase activity"/>
    <property type="evidence" value="ECO:0007669"/>
    <property type="project" value="UniProtKB-UniRule"/>
</dbReference>
<dbReference type="GO" id="GO:0050568">
    <property type="term" value="F:protein-glutamine glutaminase activity"/>
    <property type="evidence" value="ECO:0007669"/>
    <property type="project" value="UniProtKB-UniRule"/>
</dbReference>
<dbReference type="GO" id="GO:0006935">
    <property type="term" value="P:chemotaxis"/>
    <property type="evidence" value="ECO:0007669"/>
    <property type="project" value="UniProtKB-UniRule"/>
</dbReference>
<dbReference type="CDD" id="cd16432">
    <property type="entry name" value="CheB_Rec"/>
    <property type="match status" value="1"/>
</dbReference>
<dbReference type="CDD" id="cd17541">
    <property type="entry name" value="REC_CheB-like"/>
    <property type="match status" value="1"/>
</dbReference>
<dbReference type="Gene3D" id="3.40.50.2300">
    <property type="match status" value="1"/>
</dbReference>
<dbReference type="Gene3D" id="3.40.50.180">
    <property type="entry name" value="Methylesterase CheB, C-terminal domain"/>
    <property type="match status" value="1"/>
</dbReference>
<dbReference type="HAMAP" id="MF_00099">
    <property type="entry name" value="CheB_chemtxs"/>
    <property type="match status" value="1"/>
</dbReference>
<dbReference type="InterPro" id="IPR008248">
    <property type="entry name" value="CheB-like"/>
</dbReference>
<dbReference type="InterPro" id="IPR035909">
    <property type="entry name" value="CheB_C"/>
</dbReference>
<dbReference type="InterPro" id="IPR011006">
    <property type="entry name" value="CheY-like_superfamily"/>
</dbReference>
<dbReference type="InterPro" id="IPR000673">
    <property type="entry name" value="Sig_transdc_resp-reg_Me-estase"/>
</dbReference>
<dbReference type="InterPro" id="IPR001789">
    <property type="entry name" value="Sig_transdc_resp-reg_receiver"/>
</dbReference>
<dbReference type="NCBIfam" id="NF001965">
    <property type="entry name" value="PRK00742.1"/>
    <property type="match status" value="1"/>
</dbReference>
<dbReference type="NCBIfam" id="NF009206">
    <property type="entry name" value="PRK12555.1"/>
    <property type="match status" value="1"/>
</dbReference>
<dbReference type="PANTHER" id="PTHR42872">
    <property type="entry name" value="PROTEIN-GLUTAMATE METHYLESTERASE/PROTEIN-GLUTAMINE GLUTAMINASE"/>
    <property type="match status" value="1"/>
</dbReference>
<dbReference type="PANTHER" id="PTHR42872:SF6">
    <property type="entry name" value="PROTEIN-GLUTAMATE METHYLESTERASE_PROTEIN-GLUTAMINE GLUTAMINASE"/>
    <property type="match status" value="1"/>
</dbReference>
<dbReference type="Pfam" id="PF01339">
    <property type="entry name" value="CheB_methylest"/>
    <property type="match status" value="1"/>
</dbReference>
<dbReference type="Pfam" id="PF00072">
    <property type="entry name" value="Response_reg"/>
    <property type="match status" value="1"/>
</dbReference>
<dbReference type="PIRSF" id="PIRSF000876">
    <property type="entry name" value="RR_chemtxs_CheB"/>
    <property type="match status" value="1"/>
</dbReference>
<dbReference type="SMART" id="SM00448">
    <property type="entry name" value="REC"/>
    <property type="match status" value="1"/>
</dbReference>
<dbReference type="SUPFAM" id="SSF52172">
    <property type="entry name" value="CheY-like"/>
    <property type="match status" value="1"/>
</dbReference>
<dbReference type="SUPFAM" id="SSF52738">
    <property type="entry name" value="Methylesterase CheB, C-terminal domain"/>
    <property type="match status" value="1"/>
</dbReference>
<dbReference type="PROSITE" id="PS50122">
    <property type="entry name" value="CHEB"/>
    <property type="match status" value="1"/>
</dbReference>
<dbReference type="PROSITE" id="PS50110">
    <property type="entry name" value="RESPONSE_REGULATORY"/>
    <property type="match status" value="1"/>
</dbReference>
<feature type="chain" id="PRO_0000264282" description="Protein-glutamate methylesterase/protein-glutamine glutaminase 2">
    <location>
        <begin position="1"/>
        <end position="368"/>
    </location>
</feature>
<feature type="domain" description="Response regulatory" evidence="1">
    <location>
        <begin position="6"/>
        <end position="123"/>
    </location>
</feature>
<feature type="domain" description="CheB-type methylesterase" evidence="1">
    <location>
        <begin position="169"/>
        <end position="355"/>
    </location>
</feature>
<feature type="active site" evidence="1">
    <location>
        <position position="181"/>
    </location>
</feature>
<feature type="active site" evidence="1">
    <location>
        <position position="207"/>
    </location>
</feature>
<feature type="active site" evidence="1">
    <location>
        <position position="303"/>
    </location>
</feature>
<feature type="modified residue" description="4-aspartylphosphate" evidence="1">
    <location>
        <position position="57"/>
    </location>
</feature>
<proteinExistence type="inferred from homology"/>